<comment type="catalytic activity">
    <reaction evidence="1">
        <text>tRNA(Asn) + L-asparagine + ATP = L-asparaginyl-tRNA(Asn) + AMP + diphosphate + H(+)</text>
        <dbReference type="Rhea" id="RHEA:11180"/>
        <dbReference type="Rhea" id="RHEA-COMP:9659"/>
        <dbReference type="Rhea" id="RHEA-COMP:9674"/>
        <dbReference type="ChEBI" id="CHEBI:15378"/>
        <dbReference type="ChEBI" id="CHEBI:30616"/>
        <dbReference type="ChEBI" id="CHEBI:33019"/>
        <dbReference type="ChEBI" id="CHEBI:58048"/>
        <dbReference type="ChEBI" id="CHEBI:78442"/>
        <dbReference type="ChEBI" id="CHEBI:78515"/>
        <dbReference type="ChEBI" id="CHEBI:456215"/>
        <dbReference type="EC" id="6.1.1.22"/>
    </reaction>
</comment>
<comment type="subunit">
    <text evidence="1">Homodimer.</text>
</comment>
<comment type="subcellular location">
    <subcellularLocation>
        <location evidence="1">Cytoplasm</location>
    </subcellularLocation>
</comment>
<comment type="similarity">
    <text evidence="1">Belongs to the class-II aminoacyl-tRNA synthetase family.</text>
</comment>
<sequence length="508" mass="57663">MSRKLITINQVKDYVGQEVTIGAWVANKSGKGKLAFLQLRDGTAFFQAVAFKPNFIEKFGEEAGTEKFDVAKRLSQETSVYVTGIVKEDERSKFGYELDVTDLEVIGESQDYPITPKEHGTDFLMDNRHLWLRSRKQVAIQQIRNAIIYATYEFFEKNGFIKFDSPILSGNAAEDSTELFETDYFGQLAYLSQSGQLYLEAGAMALGRVFDFGPVFRAEKSKTRRHLTEFWMMDAEYSFLSHEESLDLQEAYVKALIQGVIDRAPQALETLERDVDALKRYIAEPFKRVAYDDAITLLQEHEADKDTDYEHIEHGDDFGSPHETWISNYFGVPTFVVNYPASFKAFYMKPVPGNPERVLCADLLAPEGYGEIIGGSMREDNYDALVAKMDELGMDKSEYEFYLDLRKYGSVPHGGFGIGIERMVTFVAGTKHIREAIPFPTFVAPLASVIQSSIFPFITSTYEETPFPFSQVQIFSSLLDLVWPSLITVGTSWPITKIKRKNCKIIFP</sequence>
<name>SYN_STRSY</name>
<dbReference type="EC" id="6.1.1.22" evidence="1"/>
<dbReference type="EMBL" id="CP000407">
    <property type="protein sequence ID" value="ABP89580.1"/>
    <property type="molecule type" value="Genomic_DNA"/>
</dbReference>
<dbReference type="SMR" id="A4VTZ1"/>
<dbReference type="STRING" id="391295.SSU05_0614"/>
<dbReference type="KEGG" id="ssu:SSU05_0614"/>
<dbReference type="eggNOG" id="COG0017">
    <property type="taxonomic scope" value="Bacteria"/>
</dbReference>
<dbReference type="HOGENOM" id="CLU_004553_2_0_9"/>
<dbReference type="GO" id="GO:0005737">
    <property type="term" value="C:cytoplasm"/>
    <property type="evidence" value="ECO:0007669"/>
    <property type="project" value="UniProtKB-SubCell"/>
</dbReference>
<dbReference type="GO" id="GO:0004816">
    <property type="term" value="F:asparagine-tRNA ligase activity"/>
    <property type="evidence" value="ECO:0007669"/>
    <property type="project" value="UniProtKB-UniRule"/>
</dbReference>
<dbReference type="GO" id="GO:0005524">
    <property type="term" value="F:ATP binding"/>
    <property type="evidence" value="ECO:0007669"/>
    <property type="project" value="UniProtKB-UniRule"/>
</dbReference>
<dbReference type="GO" id="GO:0140096">
    <property type="term" value="F:catalytic activity, acting on a protein"/>
    <property type="evidence" value="ECO:0007669"/>
    <property type="project" value="UniProtKB-ARBA"/>
</dbReference>
<dbReference type="GO" id="GO:0003676">
    <property type="term" value="F:nucleic acid binding"/>
    <property type="evidence" value="ECO:0007669"/>
    <property type="project" value="InterPro"/>
</dbReference>
<dbReference type="GO" id="GO:0016740">
    <property type="term" value="F:transferase activity"/>
    <property type="evidence" value="ECO:0007669"/>
    <property type="project" value="UniProtKB-ARBA"/>
</dbReference>
<dbReference type="GO" id="GO:0006421">
    <property type="term" value="P:asparaginyl-tRNA aminoacylation"/>
    <property type="evidence" value="ECO:0007669"/>
    <property type="project" value="UniProtKB-UniRule"/>
</dbReference>
<dbReference type="CDD" id="cd04323">
    <property type="entry name" value="AsnRS_cyto_like_N"/>
    <property type="match status" value="1"/>
</dbReference>
<dbReference type="CDD" id="cd00776">
    <property type="entry name" value="AsxRS_core"/>
    <property type="match status" value="1"/>
</dbReference>
<dbReference type="Gene3D" id="3.30.930.10">
    <property type="entry name" value="Bira Bifunctional Protein, Domain 2"/>
    <property type="match status" value="1"/>
</dbReference>
<dbReference type="Gene3D" id="2.40.50.140">
    <property type="entry name" value="Nucleic acid-binding proteins"/>
    <property type="match status" value="1"/>
</dbReference>
<dbReference type="HAMAP" id="MF_00534">
    <property type="entry name" value="Asn_tRNA_synth"/>
    <property type="match status" value="1"/>
</dbReference>
<dbReference type="InterPro" id="IPR004364">
    <property type="entry name" value="Aa-tRNA-synt_II"/>
</dbReference>
<dbReference type="InterPro" id="IPR006195">
    <property type="entry name" value="aa-tRNA-synth_II"/>
</dbReference>
<dbReference type="InterPro" id="IPR045864">
    <property type="entry name" value="aa-tRNA-synth_II/BPL/LPL"/>
</dbReference>
<dbReference type="InterPro" id="IPR004522">
    <property type="entry name" value="Asn-tRNA-ligase"/>
</dbReference>
<dbReference type="InterPro" id="IPR002312">
    <property type="entry name" value="Asp/Asn-tRNA-synth_IIb"/>
</dbReference>
<dbReference type="InterPro" id="IPR012340">
    <property type="entry name" value="NA-bd_OB-fold"/>
</dbReference>
<dbReference type="InterPro" id="IPR004365">
    <property type="entry name" value="NA-bd_OB_tRNA"/>
</dbReference>
<dbReference type="NCBIfam" id="TIGR00457">
    <property type="entry name" value="asnS"/>
    <property type="match status" value="1"/>
</dbReference>
<dbReference type="NCBIfam" id="NF003037">
    <property type="entry name" value="PRK03932.1"/>
    <property type="match status" value="1"/>
</dbReference>
<dbReference type="PANTHER" id="PTHR22594:SF34">
    <property type="entry name" value="ASPARAGINE--TRNA LIGASE, MITOCHONDRIAL-RELATED"/>
    <property type="match status" value="1"/>
</dbReference>
<dbReference type="PANTHER" id="PTHR22594">
    <property type="entry name" value="ASPARTYL/LYSYL-TRNA SYNTHETASE"/>
    <property type="match status" value="1"/>
</dbReference>
<dbReference type="Pfam" id="PF00152">
    <property type="entry name" value="tRNA-synt_2"/>
    <property type="match status" value="1"/>
</dbReference>
<dbReference type="Pfam" id="PF01336">
    <property type="entry name" value="tRNA_anti-codon"/>
    <property type="match status" value="1"/>
</dbReference>
<dbReference type="PRINTS" id="PR01042">
    <property type="entry name" value="TRNASYNTHASP"/>
</dbReference>
<dbReference type="SUPFAM" id="SSF55681">
    <property type="entry name" value="Class II aaRS and biotin synthetases"/>
    <property type="match status" value="1"/>
</dbReference>
<dbReference type="SUPFAM" id="SSF50249">
    <property type="entry name" value="Nucleic acid-binding proteins"/>
    <property type="match status" value="1"/>
</dbReference>
<dbReference type="PROSITE" id="PS50862">
    <property type="entry name" value="AA_TRNA_LIGASE_II"/>
    <property type="match status" value="1"/>
</dbReference>
<evidence type="ECO:0000255" key="1">
    <source>
        <dbReference type="HAMAP-Rule" id="MF_00534"/>
    </source>
</evidence>
<accession>A4VTZ1</accession>
<reference key="1">
    <citation type="journal article" date="2007" name="PLoS ONE">
        <title>A glimpse of streptococcal toxic shock syndrome from comparative genomics of S. suis 2 Chinese isolates.</title>
        <authorList>
            <person name="Chen C."/>
            <person name="Tang J."/>
            <person name="Dong W."/>
            <person name="Wang C."/>
            <person name="Feng Y."/>
            <person name="Wang J."/>
            <person name="Zheng F."/>
            <person name="Pan X."/>
            <person name="Liu D."/>
            <person name="Li M."/>
            <person name="Song Y."/>
            <person name="Zhu X."/>
            <person name="Sun H."/>
            <person name="Feng T."/>
            <person name="Guo Z."/>
            <person name="Ju A."/>
            <person name="Ge J."/>
            <person name="Dong Y."/>
            <person name="Sun W."/>
            <person name="Jiang Y."/>
            <person name="Wang J."/>
            <person name="Yan J."/>
            <person name="Yang H."/>
            <person name="Wang X."/>
            <person name="Gao G.F."/>
            <person name="Yang R."/>
            <person name="Wang J."/>
            <person name="Yu J."/>
        </authorList>
    </citation>
    <scope>NUCLEOTIDE SEQUENCE [LARGE SCALE GENOMIC DNA]</scope>
    <source>
        <strain>05ZYH33</strain>
    </source>
</reference>
<organism>
    <name type="scientific">Streptococcus suis (strain 05ZYH33)</name>
    <dbReference type="NCBI Taxonomy" id="391295"/>
    <lineage>
        <taxon>Bacteria</taxon>
        <taxon>Bacillati</taxon>
        <taxon>Bacillota</taxon>
        <taxon>Bacilli</taxon>
        <taxon>Lactobacillales</taxon>
        <taxon>Streptococcaceae</taxon>
        <taxon>Streptococcus</taxon>
    </lineage>
</organism>
<gene>
    <name evidence="1" type="primary">asnS</name>
    <name type="ordered locus">SSU05_0614</name>
</gene>
<protein>
    <recommendedName>
        <fullName evidence="1">Asparagine--tRNA ligase</fullName>
        <ecNumber evidence="1">6.1.1.22</ecNumber>
    </recommendedName>
    <alternativeName>
        <fullName evidence="1">Asparaginyl-tRNA synthetase</fullName>
        <shortName evidence="1">AsnRS</shortName>
    </alternativeName>
</protein>
<keyword id="KW-0030">Aminoacyl-tRNA synthetase</keyword>
<keyword id="KW-0067">ATP-binding</keyword>
<keyword id="KW-0963">Cytoplasm</keyword>
<keyword id="KW-0436">Ligase</keyword>
<keyword id="KW-0547">Nucleotide-binding</keyword>
<keyword id="KW-0648">Protein biosynthesis</keyword>
<proteinExistence type="inferred from homology"/>
<feature type="chain" id="PRO_1000051450" description="Asparagine--tRNA ligase">
    <location>
        <begin position="1"/>
        <end position="508"/>
    </location>
</feature>